<sequence>MLVLGIESTAHTLGVGIAKDQPPYILANERDTFVPKEGGMKPGDLLKHHAEVSGTILRRALEKANISINDINYIAVALGPGIGPALRVGATLARALSLKYNKKLVPVNHGIGHIEIGYLTTEAKDPLILYLSGGNTIITTFYKGRFRIFGETLDIALGNMMDVFVREVNLAPPYIINGKHAIDICSEKGSKLLKLPYVVKGQDMSFSGLLTAALRLVGKEKLEDICYSIREIAFDMLLEATERALALTSKKELMIVGGVAASVSLRKKLEELGKEWDVQIKIVPPEFAGDNGAMIAYAGMLAASKGVFIDVDKSYIRPRWRVDEVDIPWRN</sequence>
<evidence type="ECO:0000255" key="1">
    <source>
        <dbReference type="HAMAP-Rule" id="MF_01446"/>
    </source>
</evidence>
<keyword id="KW-0012">Acyltransferase</keyword>
<keyword id="KW-0963">Cytoplasm</keyword>
<keyword id="KW-0408">Iron</keyword>
<keyword id="KW-0479">Metal-binding</keyword>
<keyword id="KW-0808">Transferase</keyword>
<keyword id="KW-0819">tRNA processing</keyword>
<feature type="chain" id="PRO_1000215316" description="tRNA N6-adenosine threonylcarbamoyltransferase">
    <location>
        <begin position="1"/>
        <end position="331"/>
    </location>
</feature>
<feature type="binding site" evidence="1">
    <location>
        <position position="109"/>
    </location>
    <ligand>
        <name>Fe cation</name>
        <dbReference type="ChEBI" id="CHEBI:24875"/>
    </ligand>
</feature>
<feature type="binding site" evidence="1">
    <location>
        <position position="113"/>
    </location>
    <ligand>
        <name>Fe cation</name>
        <dbReference type="ChEBI" id="CHEBI:24875"/>
    </ligand>
</feature>
<feature type="binding site" evidence="1">
    <location>
        <begin position="130"/>
        <end position="134"/>
    </location>
    <ligand>
        <name>substrate</name>
    </ligand>
</feature>
<feature type="binding site" evidence="1">
    <location>
        <position position="130"/>
    </location>
    <ligand>
        <name>Fe cation</name>
        <dbReference type="ChEBI" id="CHEBI:24875"/>
    </ligand>
</feature>
<feature type="binding site" evidence="1">
    <location>
        <position position="162"/>
    </location>
    <ligand>
        <name>substrate</name>
    </ligand>
</feature>
<feature type="binding site" evidence="1">
    <location>
        <position position="183"/>
    </location>
    <ligand>
        <name>substrate</name>
    </ligand>
</feature>
<feature type="binding site" evidence="1">
    <location>
        <position position="262"/>
    </location>
    <ligand>
        <name>substrate</name>
    </ligand>
</feature>
<feature type="binding site" evidence="1">
    <location>
        <position position="290"/>
    </location>
    <ligand>
        <name>Fe cation</name>
        <dbReference type="ChEBI" id="CHEBI:24875"/>
    </ligand>
</feature>
<organism>
    <name type="scientific">Saccharolobus islandicus (strain M.14.25 / Kamchatka #1)</name>
    <name type="common">Sulfolobus islandicus</name>
    <dbReference type="NCBI Taxonomy" id="427317"/>
    <lineage>
        <taxon>Archaea</taxon>
        <taxon>Thermoproteota</taxon>
        <taxon>Thermoprotei</taxon>
        <taxon>Sulfolobales</taxon>
        <taxon>Sulfolobaceae</taxon>
        <taxon>Saccharolobus</taxon>
    </lineage>
</organism>
<accession>C3MWX2</accession>
<comment type="function">
    <text evidence="1">Required for the formation of a threonylcarbamoyl group on adenosine at position 37 (t(6)A37) in tRNAs that read codons beginning with adenine. Is probably involved in the transfer of the threonylcarbamoyl moiety of threonylcarbamoyl-AMP (TC-AMP) to the N6 group of A37.</text>
</comment>
<comment type="catalytic activity">
    <reaction evidence="1">
        <text>L-threonylcarbamoyladenylate + adenosine(37) in tRNA = N(6)-L-threonylcarbamoyladenosine(37) in tRNA + AMP + H(+)</text>
        <dbReference type="Rhea" id="RHEA:37059"/>
        <dbReference type="Rhea" id="RHEA-COMP:10162"/>
        <dbReference type="Rhea" id="RHEA-COMP:10163"/>
        <dbReference type="ChEBI" id="CHEBI:15378"/>
        <dbReference type="ChEBI" id="CHEBI:73682"/>
        <dbReference type="ChEBI" id="CHEBI:74411"/>
        <dbReference type="ChEBI" id="CHEBI:74418"/>
        <dbReference type="ChEBI" id="CHEBI:456215"/>
        <dbReference type="EC" id="2.3.1.234"/>
    </reaction>
</comment>
<comment type="cofactor">
    <cofactor evidence="1">
        <name>Fe(2+)</name>
        <dbReference type="ChEBI" id="CHEBI:29033"/>
    </cofactor>
    <text evidence="1">Binds 1 Fe(2+) ion per subunit.</text>
</comment>
<comment type="subcellular location">
    <subcellularLocation>
        <location evidence="1">Cytoplasm</location>
    </subcellularLocation>
</comment>
<comment type="similarity">
    <text evidence="1">Belongs to the KAE1 / TsaD family.</text>
</comment>
<reference key="1">
    <citation type="journal article" date="2009" name="Proc. Natl. Acad. Sci. U.S.A.">
        <title>Biogeography of the Sulfolobus islandicus pan-genome.</title>
        <authorList>
            <person name="Reno M.L."/>
            <person name="Held N.L."/>
            <person name="Fields C.J."/>
            <person name="Burke P.V."/>
            <person name="Whitaker R.J."/>
        </authorList>
    </citation>
    <scope>NUCLEOTIDE SEQUENCE [LARGE SCALE GENOMIC DNA]</scope>
    <source>
        <strain>M.14.25 / Kamchatka #1</strain>
    </source>
</reference>
<protein>
    <recommendedName>
        <fullName evidence="1">tRNA N6-adenosine threonylcarbamoyltransferase</fullName>
        <ecNumber evidence="1">2.3.1.234</ecNumber>
    </recommendedName>
    <alternativeName>
        <fullName evidence="1">N6-L-threonylcarbamoyladenine synthase</fullName>
        <shortName evidence="1">t(6)A synthase</shortName>
    </alternativeName>
    <alternativeName>
        <fullName evidence="1">t(6)A37 threonylcarbamoyladenosine biosynthesis protein Kae1</fullName>
    </alternativeName>
    <alternativeName>
        <fullName evidence="1">tRNA threonylcarbamoyladenosine biosynthesis protein Kae1</fullName>
    </alternativeName>
</protein>
<gene>
    <name evidence="1" type="primary">kae1</name>
    <name type="ordered locus">M1425_1673</name>
</gene>
<proteinExistence type="inferred from homology"/>
<name>KAE1_SACI4</name>
<dbReference type="EC" id="2.3.1.234" evidence="1"/>
<dbReference type="EMBL" id="CP001400">
    <property type="protein sequence ID" value="ACP38422.1"/>
    <property type="molecule type" value="Genomic_DNA"/>
</dbReference>
<dbReference type="RefSeq" id="WP_012711653.1">
    <property type="nucleotide sequence ID" value="NC_012588.1"/>
</dbReference>
<dbReference type="SMR" id="C3MWX2"/>
<dbReference type="GeneID" id="84062028"/>
<dbReference type="KEGG" id="sia:M1425_1673"/>
<dbReference type="HOGENOM" id="CLU_023208_2_2_2"/>
<dbReference type="Proteomes" id="UP000001350">
    <property type="component" value="Chromosome"/>
</dbReference>
<dbReference type="GO" id="GO:0005737">
    <property type="term" value="C:cytoplasm"/>
    <property type="evidence" value="ECO:0007669"/>
    <property type="project" value="UniProtKB-SubCell"/>
</dbReference>
<dbReference type="GO" id="GO:0000408">
    <property type="term" value="C:EKC/KEOPS complex"/>
    <property type="evidence" value="ECO:0007669"/>
    <property type="project" value="InterPro"/>
</dbReference>
<dbReference type="GO" id="GO:0005506">
    <property type="term" value="F:iron ion binding"/>
    <property type="evidence" value="ECO:0007669"/>
    <property type="project" value="UniProtKB-UniRule"/>
</dbReference>
<dbReference type="GO" id="GO:0061711">
    <property type="term" value="F:N(6)-L-threonylcarbamoyladenine synthase activity"/>
    <property type="evidence" value="ECO:0007669"/>
    <property type="project" value="UniProtKB-EC"/>
</dbReference>
<dbReference type="GO" id="GO:0002949">
    <property type="term" value="P:tRNA threonylcarbamoyladenosine modification"/>
    <property type="evidence" value="ECO:0007669"/>
    <property type="project" value="UniProtKB-UniRule"/>
</dbReference>
<dbReference type="FunFam" id="3.30.420.40:FF:000229">
    <property type="entry name" value="tRNA N6-adenosine threonylcarbamoyltransferase"/>
    <property type="match status" value="1"/>
</dbReference>
<dbReference type="Gene3D" id="3.30.420.40">
    <property type="match status" value="2"/>
</dbReference>
<dbReference type="HAMAP" id="MF_01446">
    <property type="entry name" value="Kae1"/>
    <property type="match status" value="1"/>
</dbReference>
<dbReference type="InterPro" id="IPR043129">
    <property type="entry name" value="ATPase_NBD"/>
</dbReference>
<dbReference type="InterPro" id="IPR000905">
    <property type="entry name" value="Gcp-like_dom"/>
</dbReference>
<dbReference type="InterPro" id="IPR017861">
    <property type="entry name" value="KAE1/TsaD"/>
</dbReference>
<dbReference type="InterPro" id="IPR034680">
    <property type="entry name" value="Kae1_archaea_euk"/>
</dbReference>
<dbReference type="NCBIfam" id="TIGR03722">
    <property type="entry name" value="arch_KAE1"/>
    <property type="match status" value="1"/>
</dbReference>
<dbReference type="NCBIfam" id="TIGR00329">
    <property type="entry name" value="gcp_kae1"/>
    <property type="match status" value="1"/>
</dbReference>
<dbReference type="PANTHER" id="PTHR11735">
    <property type="entry name" value="TRNA N6-ADENOSINE THREONYLCARBAMOYLTRANSFERASE"/>
    <property type="match status" value="1"/>
</dbReference>
<dbReference type="PANTHER" id="PTHR11735:SF14">
    <property type="entry name" value="TRNA N6-ADENOSINE THREONYLCARBAMOYLTRANSFERASE"/>
    <property type="match status" value="1"/>
</dbReference>
<dbReference type="Pfam" id="PF00814">
    <property type="entry name" value="TsaD"/>
    <property type="match status" value="1"/>
</dbReference>
<dbReference type="PRINTS" id="PR00789">
    <property type="entry name" value="OSIALOPTASE"/>
</dbReference>
<dbReference type="SUPFAM" id="SSF53067">
    <property type="entry name" value="Actin-like ATPase domain"/>
    <property type="match status" value="1"/>
</dbReference>